<dbReference type="EMBL" id="CP000679">
    <property type="protein sequence ID" value="ABP65872.1"/>
    <property type="molecule type" value="Genomic_DNA"/>
</dbReference>
<dbReference type="RefSeq" id="WP_011915838.1">
    <property type="nucleotide sequence ID" value="NC_009437.1"/>
</dbReference>
<dbReference type="STRING" id="351627.Csac_0224"/>
<dbReference type="KEGG" id="csc:Csac_0224"/>
<dbReference type="eggNOG" id="COG1342">
    <property type="taxonomic scope" value="Bacteria"/>
</dbReference>
<dbReference type="HOGENOM" id="CLU_094511_0_1_9"/>
<dbReference type="OrthoDB" id="280278at2"/>
<dbReference type="Proteomes" id="UP000000256">
    <property type="component" value="Chromosome"/>
</dbReference>
<dbReference type="Gene3D" id="1.10.10.10">
    <property type="entry name" value="Winged helix-like DNA-binding domain superfamily/Winged helix DNA-binding domain"/>
    <property type="match status" value="1"/>
</dbReference>
<dbReference type="HAMAP" id="MF_00674">
    <property type="entry name" value="UPF0251"/>
    <property type="match status" value="1"/>
</dbReference>
<dbReference type="InterPro" id="IPR013324">
    <property type="entry name" value="RNA_pol_sigma_r3/r4-like"/>
</dbReference>
<dbReference type="InterPro" id="IPR002852">
    <property type="entry name" value="UPF0251"/>
</dbReference>
<dbReference type="InterPro" id="IPR036388">
    <property type="entry name" value="WH-like_DNA-bd_sf"/>
</dbReference>
<dbReference type="PANTHER" id="PTHR37478">
    <property type="match status" value="1"/>
</dbReference>
<dbReference type="PANTHER" id="PTHR37478:SF2">
    <property type="entry name" value="UPF0251 PROTEIN TK0562"/>
    <property type="match status" value="1"/>
</dbReference>
<dbReference type="Pfam" id="PF02001">
    <property type="entry name" value="DUF134"/>
    <property type="match status" value="1"/>
</dbReference>
<dbReference type="SUPFAM" id="SSF88659">
    <property type="entry name" value="Sigma3 and sigma4 domains of RNA polymerase sigma factors"/>
    <property type="match status" value="1"/>
</dbReference>
<gene>
    <name type="ordered locus">Csac_0224</name>
</gene>
<protein>
    <recommendedName>
        <fullName evidence="1">UPF0251 protein Csac_0224</fullName>
    </recommendedName>
</protein>
<accession>A4XG37</accession>
<organism>
    <name type="scientific">Caldicellulosiruptor saccharolyticus (strain ATCC 43494 / DSM 8903 / Tp8T 6331)</name>
    <dbReference type="NCBI Taxonomy" id="351627"/>
    <lineage>
        <taxon>Bacteria</taxon>
        <taxon>Bacillati</taxon>
        <taxon>Bacillota</taxon>
        <taxon>Bacillota incertae sedis</taxon>
        <taxon>Caldicellulosiruptorales</taxon>
        <taxon>Caldicellulosiruptoraceae</taxon>
        <taxon>Caldicellulosiruptor</taxon>
    </lineage>
</organism>
<comment type="similarity">
    <text evidence="1">Belongs to the UPF0251 family.</text>
</comment>
<name>Y224_CALS8</name>
<reference key="1">
    <citation type="submission" date="2007-04" db="EMBL/GenBank/DDBJ databases">
        <title>Genome sequence of the thermophilic hydrogen-producing bacterium Caldicellulosiruptor saccharolyticus DSM 8903.</title>
        <authorList>
            <person name="Copeland A."/>
            <person name="Lucas S."/>
            <person name="Lapidus A."/>
            <person name="Barry K."/>
            <person name="Detter J.C."/>
            <person name="Glavina del Rio T."/>
            <person name="Hammon N."/>
            <person name="Israni S."/>
            <person name="Dalin E."/>
            <person name="Tice H."/>
            <person name="Pitluck S."/>
            <person name="Kiss H."/>
            <person name="Brettin T."/>
            <person name="Bruce D."/>
            <person name="Han C."/>
            <person name="Schmutz J."/>
            <person name="Larimer F."/>
            <person name="Land M."/>
            <person name="Hauser L."/>
            <person name="Kyrpides N."/>
            <person name="Lykidis A."/>
            <person name="van de Werken H.J.G."/>
            <person name="Verhaart M.R.A."/>
            <person name="VanFossen A.L."/>
            <person name="Lewis D.L."/>
            <person name="Nichols J.D."/>
            <person name="Goorissen H.P."/>
            <person name="van Niel E.W.J."/>
            <person name="Stams F.J.M."/>
            <person name="Willquist K.U."/>
            <person name="Ward D.E."/>
            <person name="van der Oost J."/>
            <person name="Kelly R.M."/>
            <person name="Kengen S.M.W."/>
            <person name="Richardson P."/>
        </authorList>
    </citation>
    <scope>NUCLEOTIDE SEQUENCE [LARGE SCALE GENOMIC DNA]</scope>
    <source>
        <strain>ATCC 43494 / DSM 8903 / Tp8T 6331</strain>
    </source>
</reference>
<sequence length="139" mass="16000">MPRPIRCRRVEFLPKFKYFSPAQGTSDEVTLKIEELEAIRLKDLEGLMQEECAQKMQVSRQTFQLILEEARKKIADALVHGKAIRIEGGNYVYGKCSYICLNCGKVFDSDYHECPECHSKDIGCTRGRGRCYCFGHGRR</sequence>
<feature type="chain" id="PRO_1000044740" description="UPF0251 protein Csac_0224">
    <location>
        <begin position="1"/>
        <end position="139"/>
    </location>
</feature>
<evidence type="ECO:0000255" key="1">
    <source>
        <dbReference type="HAMAP-Rule" id="MF_00674"/>
    </source>
</evidence>
<proteinExistence type="inferred from homology"/>